<dbReference type="EC" id="2.4.2.4" evidence="1"/>
<dbReference type="EMBL" id="CP000946">
    <property type="protein sequence ID" value="ACA79285.1"/>
    <property type="molecule type" value="Genomic_DNA"/>
</dbReference>
<dbReference type="RefSeq" id="WP_000477811.1">
    <property type="nucleotide sequence ID" value="NZ_MTFT01000024.1"/>
</dbReference>
<dbReference type="SMR" id="B1IS37"/>
<dbReference type="GeneID" id="93777462"/>
<dbReference type="KEGG" id="ecl:EcolC_3674"/>
<dbReference type="HOGENOM" id="CLU_025040_0_1_6"/>
<dbReference type="UniPathway" id="UPA00578">
    <property type="reaction ID" value="UER00638"/>
</dbReference>
<dbReference type="GO" id="GO:0005829">
    <property type="term" value="C:cytosol"/>
    <property type="evidence" value="ECO:0007669"/>
    <property type="project" value="TreeGrafter"/>
</dbReference>
<dbReference type="GO" id="GO:0004645">
    <property type="term" value="F:1,4-alpha-oligoglucan phosphorylase activity"/>
    <property type="evidence" value="ECO:0007669"/>
    <property type="project" value="InterPro"/>
</dbReference>
<dbReference type="GO" id="GO:0009032">
    <property type="term" value="F:thymidine phosphorylase activity"/>
    <property type="evidence" value="ECO:0007669"/>
    <property type="project" value="UniProtKB-UniRule"/>
</dbReference>
<dbReference type="GO" id="GO:0006206">
    <property type="term" value="P:pyrimidine nucleobase metabolic process"/>
    <property type="evidence" value="ECO:0007669"/>
    <property type="project" value="InterPro"/>
</dbReference>
<dbReference type="GO" id="GO:0046104">
    <property type="term" value="P:thymidine metabolic process"/>
    <property type="evidence" value="ECO:0007669"/>
    <property type="project" value="UniProtKB-UniRule"/>
</dbReference>
<dbReference type="FunFam" id="3.40.1030.10:FF:000001">
    <property type="entry name" value="Thymidine phosphorylase"/>
    <property type="match status" value="1"/>
</dbReference>
<dbReference type="FunFam" id="3.90.1170.30:FF:000001">
    <property type="entry name" value="Thymidine phosphorylase"/>
    <property type="match status" value="1"/>
</dbReference>
<dbReference type="Gene3D" id="3.40.1030.10">
    <property type="entry name" value="Nucleoside phosphorylase/phosphoribosyltransferase catalytic domain"/>
    <property type="match status" value="1"/>
</dbReference>
<dbReference type="Gene3D" id="3.90.1170.30">
    <property type="entry name" value="Pyrimidine nucleoside phosphorylase-like, C-terminal domain"/>
    <property type="match status" value="1"/>
</dbReference>
<dbReference type="Gene3D" id="1.20.970.10">
    <property type="entry name" value="Transferase, Pyrimidine Nucleoside Phosphorylase, Chain C"/>
    <property type="match status" value="1"/>
</dbReference>
<dbReference type="HAMAP" id="MF_01628">
    <property type="entry name" value="Thymid_phosp"/>
    <property type="match status" value="1"/>
</dbReference>
<dbReference type="InterPro" id="IPR000312">
    <property type="entry name" value="Glycosyl_Trfase_fam3"/>
</dbReference>
<dbReference type="InterPro" id="IPR017459">
    <property type="entry name" value="Glycosyl_Trfase_fam3_N_dom"/>
</dbReference>
<dbReference type="InterPro" id="IPR036320">
    <property type="entry name" value="Glycosyl_Trfase_fam3_N_dom_sf"/>
</dbReference>
<dbReference type="InterPro" id="IPR035902">
    <property type="entry name" value="Nuc_phospho_transferase"/>
</dbReference>
<dbReference type="InterPro" id="IPR036566">
    <property type="entry name" value="PYNP-like_C_sf"/>
</dbReference>
<dbReference type="InterPro" id="IPR013102">
    <property type="entry name" value="PYNP_C"/>
</dbReference>
<dbReference type="InterPro" id="IPR018090">
    <property type="entry name" value="Pyrmidine_PPas_bac/euk"/>
</dbReference>
<dbReference type="InterPro" id="IPR017872">
    <property type="entry name" value="Pyrmidine_PPase_CS"/>
</dbReference>
<dbReference type="InterPro" id="IPR000053">
    <property type="entry name" value="Thymidine/pyrmidine_PPase"/>
</dbReference>
<dbReference type="InterPro" id="IPR013465">
    <property type="entry name" value="Thymidine_Pase"/>
</dbReference>
<dbReference type="NCBIfam" id="NF004490">
    <property type="entry name" value="PRK05820.1"/>
    <property type="match status" value="1"/>
</dbReference>
<dbReference type="NCBIfam" id="TIGR02643">
    <property type="entry name" value="T_phosphoryl"/>
    <property type="match status" value="1"/>
</dbReference>
<dbReference type="NCBIfam" id="TIGR02644">
    <property type="entry name" value="Y_phosphoryl"/>
    <property type="match status" value="1"/>
</dbReference>
<dbReference type="PANTHER" id="PTHR10515">
    <property type="entry name" value="THYMIDINE PHOSPHORYLASE"/>
    <property type="match status" value="1"/>
</dbReference>
<dbReference type="PANTHER" id="PTHR10515:SF0">
    <property type="entry name" value="THYMIDINE PHOSPHORYLASE"/>
    <property type="match status" value="1"/>
</dbReference>
<dbReference type="Pfam" id="PF02885">
    <property type="entry name" value="Glycos_trans_3N"/>
    <property type="match status" value="1"/>
</dbReference>
<dbReference type="Pfam" id="PF00591">
    <property type="entry name" value="Glycos_transf_3"/>
    <property type="match status" value="1"/>
</dbReference>
<dbReference type="Pfam" id="PF07831">
    <property type="entry name" value="PYNP_C"/>
    <property type="match status" value="1"/>
</dbReference>
<dbReference type="PIRSF" id="PIRSF000478">
    <property type="entry name" value="TP_PyNP"/>
    <property type="match status" value="1"/>
</dbReference>
<dbReference type="SMART" id="SM00941">
    <property type="entry name" value="PYNP_C"/>
    <property type="match status" value="1"/>
</dbReference>
<dbReference type="SUPFAM" id="SSF52418">
    <property type="entry name" value="Nucleoside phosphorylase/phosphoribosyltransferase catalytic domain"/>
    <property type="match status" value="1"/>
</dbReference>
<dbReference type="SUPFAM" id="SSF47648">
    <property type="entry name" value="Nucleoside phosphorylase/phosphoribosyltransferase N-terminal domain"/>
    <property type="match status" value="1"/>
</dbReference>
<dbReference type="SUPFAM" id="SSF54680">
    <property type="entry name" value="Pyrimidine nucleoside phosphorylase C-terminal domain"/>
    <property type="match status" value="1"/>
</dbReference>
<dbReference type="PROSITE" id="PS00647">
    <property type="entry name" value="THYMID_PHOSPHORYLASE"/>
    <property type="match status" value="1"/>
</dbReference>
<name>TYPH_ECOLC</name>
<sequence>MFLAQEIIRKKRDGHALSDEEIRFFINGIRDNTISEGQIAALAMTIFFHDMTMPERVSLTMAMRDSGTVLDWKSLHLNGPIVDKHSTGGVGDVTSLMLGPMVAACGGYIPMISGRGLGHTGGTLDKLESIPGFDIFPDDNRFREIIKDVGVAIIGQTSSLAPADKRFYATRDITATVDSIPLITASILAKKLAEGLDALVMDVKVGSGAFMPTYELSEALAEAIVGVANGAGVRTTALLTDMNQVLASSAGNAVEVREAVQFLTGEYRNPRLFDVTMALCVEMLISGKLAKDDAEARAKLQAVLDNGKAAEVFGRMVAAQKGPTDFVENYAKYLPTAMLTKAVYADTEGFVSEMDTRALGMAVVAMGGGRRQASDTIDYSVGFTDMARLGDQVDGQRPLAVIHAKDENSWQEAAKAVKAAIKLADKAPESTPTVYRRISE</sequence>
<reference key="1">
    <citation type="submission" date="2008-02" db="EMBL/GenBank/DDBJ databases">
        <title>Complete sequence of Escherichia coli C str. ATCC 8739.</title>
        <authorList>
            <person name="Copeland A."/>
            <person name="Lucas S."/>
            <person name="Lapidus A."/>
            <person name="Glavina del Rio T."/>
            <person name="Dalin E."/>
            <person name="Tice H."/>
            <person name="Bruce D."/>
            <person name="Goodwin L."/>
            <person name="Pitluck S."/>
            <person name="Kiss H."/>
            <person name="Brettin T."/>
            <person name="Detter J.C."/>
            <person name="Han C."/>
            <person name="Kuske C.R."/>
            <person name="Schmutz J."/>
            <person name="Larimer F."/>
            <person name="Land M."/>
            <person name="Hauser L."/>
            <person name="Kyrpides N."/>
            <person name="Mikhailova N."/>
            <person name="Ingram L."/>
            <person name="Richardson P."/>
        </authorList>
    </citation>
    <scope>NUCLEOTIDE SEQUENCE [LARGE SCALE GENOMIC DNA]</scope>
    <source>
        <strain>ATCC 8739 / DSM 1576 / NBRC 3972 / NCIMB 8545 / WDCM 00012 / Crooks</strain>
    </source>
</reference>
<accession>B1IS37</accession>
<proteinExistence type="inferred from homology"/>
<organism>
    <name type="scientific">Escherichia coli (strain ATCC 8739 / DSM 1576 / NBRC 3972 / NCIMB 8545 / WDCM 00012 / Crooks)</name>
    <dbReference type="NCBI Taxonomy" id="481805"/>
    <lineage>
        <taxon>Bacteria</taxon>
        <taxon>Pseudomonadati</taxon>
        <taxon>Pseudomonadota</taxon>
        <taxon>Gammaproteobacteria</taxon>
        <taxon>Enterobacterales</taxon>
        <taxon>Enterobacteriaceae</taxon>
        <taxon>Escherichia</taxon>
    </lineage>
</organism>
<evidence type="ECO:0000255" key="1">
    <source>
        <dbReference type="HAMAP-Rule" id="MF_01628"/>
    </source>
</evidence>
<keyword id="KW-0328">Glycosyltransferase</keyword>
<keyword id="KW-0808">Transferase</keyword>
<feature type="chain" id="PRO_1000088107" description="Thymidine phosphorylase">
    <location>
        <begin position="1"/>
        <end position="440"/>
    </location>
</feature>
<gene>
    <name evidence="1" type="primary">deoA</name>
    <name type="ordered locus">EcolC_3674</name>
</gene>
<protein>
    <recommendedName>
        <fullName evidence="1">Thymidine phosphorylase</fullName>
        <ecNumber evidence="1">2.4.2.4</ecNumber>
    </recommendedName>
    <alternativeName>
        <fullName evidence="1">TdRPase</fullName>
    </alternativeName>
</protein>
<comment type="function">
    <text evidence="1">The enzymes which catalyze the reversible phosphorolysis of pyrimidine nucleosides are involved in the degradation of these compounds and in their utilization as carbon and energy sources, or in the rescue of pyrimidine bases for nucleotide synthesis.</text>
</comment>
<comment type="catalytic activity">
    <reaction evidence="1">
        <text>thymidine + phosphate = 2-deoxy-alpha-D-ribose 1-phosphate + thymine</text>
        <dbReference type="Rhea" id="RHEA:16037"/>
        <dbReference type="ChEBI" id="CHEBI:17748"/>
        <dbReference type="ChEBI" id="CHEBI:17821"/>
        <dbReference type="ChEBI" id="CHEBI:43474"/>
        <dbReference type="ChEBI" id="CHEBI:57259"/>
        <dbReference type="EC" id="2.4.2.4"/>
    </reaction>
</comment>
<comment type="pathway">
    <text evidence="1">Pyrimidine metabolism; dTMP biosynthesis via salvage pathway; dTMP from thymine: step 1/2.</text>
</comment>
<comment type="subunit">
    <text evidence="1">Homodimer.</text>
</comment>
<comment type="similarity">
    <text evidence="1">Belongs to the thymidine/pyrimidine-nucleoside phosphorylase family.</text>
</comment>